<sequence length="16" mass="1633">SGSAKVAFSAIRSTNH</sequence>
<gene>
    <name type="primary">Cbln1</name>
</gene>
<feature type="chain" id="PRO_0000274213" description="Cerebellin-1">
    <location>
        <begin position="1" status="less than"/>
        <end position="16" status="greater than"/>
    </location>
</feature>
<feature type="peptide" id="PRO_0000043587" description="Cerebellin">
    <location>
        <begin position="1"/>
        <end position="16"/>
    </location>
</feature>
<feature type="peptide" id="PRO_0000274214" description="[des-Ser1]-cerebellin">
    <location>
        <begin position="2"/>
        <end position="16"/>
    </location>
</feature>
<feature type="domain" description="C1q" evidence="4">
    <location>
        <begin position="1"/>
        <end position="16" status="greater than"/>
    </location>
</feature>
<feature type="non-terminal residue">
    <location>
        <position position="1"/>
    </location>
</feature>
<feature type="non-terminal residue">
    <location>
        <position position="16"/>
    </location>
</feature>
<accession>P63181</accession>
<accession>P02682</accession>
<accession>P23436</accession>
<comment type="function">
    <text evidence="1 3">Required for synapse integrity and synaptic plasticity. During cerebellar synapse formation, essential for the matching and maintenance of pre- and post-synaptic elements at parallel fiber-Purkinje cell synapses, the establishment of the proper pattern of climbing fiber-Purkinje cell innervation, and induction of long-term depression at parallel fiber-Purkinje cell synapses. Plays a role as a synaptic organizer that acts bidirectionally on both pre- and post-synaptic components. On the one hand induces accumulation of synaptic vesicles in the pre-synaptic part by binding with NRXN1 and in other hand induces clustering of GRID2 and its associated proteins at the post-synaptic site through association of GRID2. NRXN1-CBLN1-GRID2 complex directly induces parallel fiber protrusions that encapsulate spines of Purkinje cells leading to accumulation of GRID2 and synaptic vesicles. Required for CBLN3 export from the endoplasmic reticulum and secretion (By similarity). NRXN1-CBLN1-GRID2 complex mediates the D-Serine-dependent long term depression signals and AMPA receptor endocytosis (By similarity). Essential for long-term maintenance but not establishment of excitatory synapses (By similarity). Inhibits the formation and function of inhibitory GABAergic synapses in cerebellar Purkinje cells (By similarity).</text>
</comment>
<comment type="function">
    <text evidence="2">The cerebellin peptide exerts neuromodulatory functions. Directly stimulates norepinephrine release via the adenylate cyclase/PKA-dependent signaling pathway; and indirectly enhances adrenocortical secretion in vivo, through a paracrine mechanism involving medullary catecholamine release.</text>
</comment>
<comment type="subunit">
    <text evidence="1 3">Homohexamer; disulfide-linked homotrimers. The trimers are assembled via the globular C1q domains. The trimers associate via N-terminal cysteine residues to form disulfide-linked hexamers. May form oligomers with CBLN2, CBLN3 and CBLN4 prior to secretion. Once secreted, does not interact with other CBLN family members. Interacts with GRID1. Interacts with NRXN1 and NRXN2 long (alpha) and short (beta) isoforms produced by alternative promoter usage. Competes with NLGN1 for NRXN1-binding. Weakly interacts with NRXN3 short isoform and not at all with NRXN3 long isoform (By similarity). Interacts (via C1q domain) with GRID2; GRID2-binding is calcium-independent; CBLN1 hexamers anchor GRID2 N-terminal domain dimers to monomeric NRXN1 isoform beta; promotes synaptogenesis and mediates the D-Serine-dependent long term depression signals and AMPA receptor endocytosis (By similarity). Interacts with OTOL1 (By similarity).</text>
</comment>
<comment type="subcellular location">
    <subcellularLocation>
        <location evidence="3">Secreted</location>
    </subcellularLocation>
    <subcellularLocation>
        <location evidence="3">Postsynaptic cell membrane</location>
    </subcellularLocation>
</comment>
<comment type="tissue specificity">
    <text>Localized in the Purkinje cells. Cerebellin and [des-Ser1]-cerebellin are equally abundant.</text>
</comment>
<comment type="PTM">
    <text evidence="3">The proteolytic processing to yield cerebellin seems to occur either prior to the secretion by presynaptic neurons and subsequent oligomerization or in some other location after release of the mature protein.</text>
</comment>
<comment type="PTM">
    <text evidence="3">Sialoglycoprotein.</text>
</comment>
<dbReference type="PIR" id="PL0124">
    <property type="entry name" value="PL0124"/>
</dbReference>
<dbReference type="InParanoid" id="P63181"/>
<dbReference type="Proteomes" id="UP000008227">
    <property type="component" value="Unplaced"/>
</dbReference>
<dbReference type="Proteomes" id="UP000314985">
    <property type="component" value="Unplaced"/>
</dbReference>
<dbReference type="Proteomes" id="UP000694570">
    <property type="component" value="Unplaced"/>
</dbReference>
<dbReference type="Proteomes" id="UP000694571">
    <property type="component" value="Unplaced"/>
</dbReference>
<dbReference type="Proteomes" id="UP000694720">
    <property type="component" value="Unplaced"/>
</dbReference>
<dbReference type="Proteomes" id="UP000694722">
    <property type="component" value="Unplaced"/>
</dbReference>
<dbReference type="Proteomes" id="UP000694723">
    <property type="component" value="Unplaced"/>
</dbReference>
<dbReference type="Proteomes" id="UP000694724">
    <property type="component" value="Unplaced"/>
</dbReference>
<dbReference type="Proteomes" id="UP000694725">
    <property type="component" value="Unplaced"/>
</dbReference>
<dbReference type="Proteomes" id="UP000694726">
    <property type="component" value="Unplaced"/>
</dbReference>
<dbReference type="Proteomes" id="UP000694727">
    <property type="component" value="Unplaced"/>
</dbReference>
<dbReference type="Proteomes" id="UP000694728">
    <property type="component" value="Unplaced"/>
</dbReference>
<dbReference type="GO" id="GO:0005576">
    <property type="term" value="C:extracellular region"/>
    <property type="evidence" value="ECO:0000250"/>
    <property type="project" value="UniProtKB"/>
</dbReference>
<dbReference type="GO" id="GO:0045211">
    <property type="term" value="C:postsynaptic membrane"/>
    <property type="evidence" value="ECO:0000250"/>
    <property type="project" value="UniProtKB"/>
</dbReference>
<dbReference type="GO" id="GO:0099558">
    <property type="term" value="P:maintenance of synapse structure"/>
    <property type="evidence" value="ECO:0000250"/>
    <property type="project" value="UniProtKB"/>
</dbReference>
<dbReference type="GO" id="GO:1905703">
    <property type="term" value="P:negative regulation of inhibitory synapse assembly"/>
    <property type="evidence" value="ECO:0000250"/>
    <property type="project" value="UniProtKB"/>
</dbReference>
<dbReference type="GO" id="GO:0050808">
    <property type="term" value="P:synapse organization"/>
    <property type="evidence" value="ECO:0000250"/>
    <property type="project" value="UniProtKB"/>
</dbReference>
<dbReference type="InterPro" id="IPR001073">
    <property type="entry name" value="C1q_dom"/>
</dbReference>
<dbReference type="PROSITE" id="PS50871">
    <property type="entry name" value="C1Q"/>
    <property type="match status" value="1"/>
</dbReference>
<proteinExistence type="evidence at protein level"/>
<organism>
    <name type="scientific">Sus scrofa</name>
    <name type="common">Pig</name>
    <dbReference type="NCBI Taxonomy" id="9823"/>
    <lineage>
        <taxon>Eukaryota</taxon>
        <taxon>Metazoa</taxon>
        <taxon>Chordata</taxon>
        <taxon>Craniata</taxon>
        <taxon>Vertebrata</taxon>
        <taxon>Euteleostomi</taxon>
        <taxon>Mammalia</taxon>
        <taxon>Eutheria</taxon>
        <taxon>Laurasiatheria</taxon>
        <taxon>Artiodactyla</taxon>
        <taxon>Suina</taxon>
        <taxon>Suidae</taxon>
        <taxon>Sus</taxon>
    </lineage>
</organism>
<protein>
    <recommendedName>
        <fullName>Cerebellin-1</fullName>
    </recommendedName>
    <alternativeName>
        <fullName>Precerebellin</fullName>
    </alternativeName>
    <component>
        <recommendedName>
            <fullName>Cerebellin</fullName>
            <shortName>CER</shortName>
        </recommendedName>
    </component>
    <component>
        <recommendedName>
            <fullName>[des-Ser1]-cerebellin</fullName>
        </recommendedName>
    </component>
</protein>
<name>CBLN1_PIG</name>
<reference key="1">
    <citation type="journal article" date="1989" name="J. Neurochem.">
        <title>Purification and characterisation of cerebellins from human and porcine cerebellum.</title>
        <authorList>
            <person name="Yiangou Y."/>
            <person name="Burnet P."/>
            <person name="Nikou G."/>
            <person name="Chrysanthou B.J."/>
            <person name="Bloom S.R."/>
        </authorList>
    </citation>
    <scope>PROTEIN SEQUENCE (CEREBELLIN AND [DES-SER1]-CEREBELLIN)</scope>
    <source>
        <tissue>Brain</tissue>
    </source>
</reference>
<evidence type="ECO:0000250" key="1">
    <source>
        <dbReference type="UniProtKB" id="P23435"/>
    </source>
</evidence>
<evidence type="ECO:0000250" key="2">
    <source>
        <dbReference type="UniProtKB" id="P63182"/>
    </source>
</evidence>
<evidence type="ECO:0000250" key="3">
    <source>
        <dbReference type="UniProtKB" id="Q9R171"/>
    </source>
</evidence>
<evidence type="ECO:0000255" key="4">
    <source>
        <dbReference type="PROSITE-ProRule" id="PRU00368"/>
    </source>
</evidence>
<keyword id="KW-1003">Cell membrane</keyword>
<keyword id="KW-0903">Direct protein sequencing</keyword>
<keyword id="KW-1015">Disulfide bond</keyword>
<keyword id="KW-0325">Glycoprotein</keyword>
<keyword id="KW-0472">Membrane</keyword>
<keyword id="KW-0628">Postsynaptic cell membrane</keyword>
<keyword id="KW-1185">Reference proteome</keyword>
<keyword id="KW-0964">Secreted</keyword>
<keyword id="KW-0730">Sialic acid</keyword>
<keyword id="KW-0770">Synapse</keyword>